<organism>
    <name type="scientific">Pyrenophora tritici-repentis (strain Pt-1C-BFP)</name>
    <name type="common">Wheat tan spot fungus</name>
    <name type="synonym">Drechslera tritici-repentis</name>
    <dbReference type="NCBI Taxonomy" id="426418"/>
    <lineage>
        <taxon>Eukaryota</taxon>
        <taxon>Fungi</taxon>
        <taxon>Dikarya</taxon>
        <taxon>Ascomycota</taxon>
        <taxon>Pezizomycotina</taxon>
        <taxon>Dothideomycetes</taxon>
        <taxon>Pleosporomycetidae</taxon>
        <taxon>Pleosporales</taxon>
        <taxon>Pleosporineae</taxon>
        <taxon>Pleosporaceae</taxon>
        <taxon>Pyrenophora</taxon>
    </lineage>
</organism>
<name>AIM41_PYRTR</name>
<feature type="transit peptide" description="Mitochondrion" evidence="2">
    <location>
        <begin position="1"/>
        <end position="23"/>
    </location>
</feature>
<feature type="chain" id="PRO_0000399869" description="Altered inheritance of mitochondria protein 41, mitochondrial">
    <location>
        <begin position="24"/>
        <end position="181"/>
    </location>
</feature>
<protein>
    <recommendedName>
        <fullName>Altered inheritance of mitochondria protein 41, mitochondrial</fullName>
    </recommendedName>
</protein>
<dbReference type="EMBL" id="DS231630">
    <property type="protein sequence ID" value="EDU44388.1"/>
    <property type="molecule type" value="Genomic_DNA"/>
</dbReference>
<dbReference type="RefSeq" id="XP_001941669.1">
    <property type="nucleotide sequence ID" value="XM_001941634.1"/>
</dbReference>
<dbReference type="SMR" id="B2WMX8"/>
<dbReference type="FunCoup" id="B2WMX8">
    <property type="interactions" value="88"/>
</dbReference>
<dbReference type="STRING" id="426418.B2WMX8"/>
<dbReference type="EnsemblFungi" id="EDU44388">
    <property type="protein sequence ID" value="EDU44388"/>
    <property type="gene ID" value="PTRG_11338"/>
</dbReference>
<dbReference type="GeneID" id="6349652"/>
<dbReference type="KEGG" id="ptrr:6349652"/>
<dbReference type="eggNOG" id="ENOG502SDB7">
    <property type="taxonomic scope" value="Eukaryota"/>
</dbReference>
<dbReference type="HOGENOM" id="CLU_079430_0_1_1"/>
<dbReference type="InParanoid" id="B2WMX8"/>
<dbReference type="OMA" id="AMGAVMK"/>
<dbReference type="OrthoDB" id="33655at28556"/>
<dbReference type="Proteomes" id="UP000001471">
    <property type="component" value="Unassembled WGS sequence"/>
</dbReference>
<dbReference type="GO" id="GO:0005739">
    <property type="term" value="C:mitochondrion"/>
    <property type="evidence" value="ECO:0007669"/>
    <property type="project" value="UniProtKB-SubCell"/>
</dbReference>
<dbReference type="GO" id="GO:0016884">
    <property type="term" value="F:carbon-nitrogen ligase activity, with glutamine as amido-N-donor"/>
    <property type="evidence" value="ECO:0007669"/>
    <property type="project" value="InterPro"/>
</dbReference>
<dbReference type="Gene3D" id="1.10.10.410">
    <property type="match status" value="1"/>
</dbReference>
<dbReference type="Gene3D" id="1.10.1510.10">
    <property type="entry name" value="Uncharacterised protein YqeY/AIM41 PF09424, N-terminal domain"/>
    <property type="match status" value="1"/>
</dbReference>
<dbReference type="InterPro" id="IPR003789">
    <property type="entry name" value="Asn/Gln_tRNA_amidoTrase-B-like"/>
</dbReference>
<dbReference type="InterPro" id="IPR023168">
    <property type="entry name" value="GatB_Yqey_C_2"/>
</dbReference>
<dbReference type="InterPro" id="IPR019004">
    <property type="entry name" value="YqeY/Aim41"/>
</dbReference>
<dbReference type="InterPro" id="IPR042184">
    <property type="entry name" value="YqeY/Aim41_N"/>
</dbReference>
<dbReference type="PANTHER" id="PTHR28055">
    <property type="entry name" value="ALTERED INHERITANCE OF MITOCHONDRIA PROTEIN 41, MITOCHONDRIAL"/>
    <property type="match status" value="1"/>
</dbReference>
<dbReference type="PANTHER" id="PTHR28055:SF1">
    <property type="entry name" value="ALTERED INHERITANCE OF MITOCHONDRIA PROTEIN 41, MITOCHONDRIAL"/>
    <property type="match status" value="1"/>
</dbReference>
<dbReference type="Pfam" id="PF09424">
    <property type="entry name" value="YqeY"/>
    <property type="match status" value="1"/>
</dbReference>
<dbReference type="SUPFAM" id="SSF89095">
    <property type="entry name" value="GatB/YqeY motif"/>
    <property type="match status" value="1"/>
</dbReference>
<sequence length="181" mass="19957">MSLFRSTMLRRQLLTSRSVCLRYSSTSTPENVVLPRLQADLKNAMRSKNKPALNTIRAIQAEIINASKTAKPITTDSALYSLIQKQIKSSSASIEEFRNAKREDLVEKEQAQLDVLQGYSGEIPTVGESEIDELVKSALEGLEEGKRSAGHVMGRVMSSIKGRAVDSEYVSKKIQEVVGAK</sequence>
<gene>
    <name type="primary">AIM41</name>
    <name type="ORF">PTRG_11338</name>
</gene>
<accession>B2WMX8</accession>
<reference key="1">
    <citation type="journal article" date="2013" name="G3 (Bethesda)">
        <title>Comparative genomics of a plant-pathogenic fungus, Pyrenophora tritici-repentis, reveals transduplication and the impact of repeat elements on pathogenicity and population divergence.</title>
        <authorList>
            <person name="Manning V.A."/>
            <person name="Pandelova I."/>
            <person name="Dhillon B."/>
            <person name="Wilhelm L.J."/>
            <person name="Goodwin S.B."/>
            <person name="Berlin A.M."/>
            <person name="Figueroa M."/>
            <person name="Freitag M."/>
            <person name="Hane J.K."/>
            <person name="Henrissat B."/>
            <person name="Holman W.H."/>
            <person name="Kodira C.D."/>
            <person name="Martin J."/>
            <person name="Oliver R.P."/>
            <person name="Robbertse B."/>
            <person name="Schackwitz W."/>
            <person name="Schwartz D.C."/>
            <person name="Spatafora J.W."/>
            <person name="Turgeon B.G."/>
            <person name="Yandava C."/>
            <person name="Young S."/>
            <person name="Zhou S."/>
            <person name="Zeng Q."/>
            <person name="Grigoriev I.V."/>
            <person name="Ma L.-J."/>
            <person name="Ciuffetti L.M."/>
        </authorList>
    </citation>
    <scope>NUCLEOTIDE SEQUENCE [LARGE SCALE GENOMIC DNA]</scope>
    <source>
        <strain>Pt-1C-BFP</strain>
    </source>
</reference>
<evidence type="ECO:0000250" key="1"/>
<evidence type="ECO:0000255" key="2"/>
<evidence type="ECO:0000305" key="3"/>
<keyword id="KW-0496">Mitochondrion</keyword>
<keyword id="KW-1185">Reference proteome</keyword>
<keyword id="KW-0809">Transit peptide</keyword>
<comment type="subcellular location">
    <subcellularLocation>
        <location evidence="1">Mitochondrion</location>
    </subcellularLocation>
</comment>
<comment type="similarity">
    <text evidence="3">Belongs to the AIM41 family.</text>
</comment>
<proteinExistence type="inferred from homology"/>